<evidence type="ECO:0000255" key="1">
    <source>
        <dbReference type="HAMAP-Rule" id="MF_00315"/>
    </source>
</evidence>
<evidence type="ECO:0007829" key="2">
    <source>
        <dbReference type="PDB" id="8OGH"/>
    </source>
</evidence>
<reference key="1">
    <citation type="journal article" date="1998" name="Nature">
        <title>Deciphering the biology of Mycobacterium tuberculosis from the complete genome sequence.</title>
        <authorList>
            <person name="Cole S.T."/>
            <person name="Brosch R."/>
            <person name="Parkhill J."/>
            <person name="Garnier T."/>
            <person name="Churcher C.M."/>
            <person name="Harris D.E."/>
            <person name="Gordon S.V."/>
            <person name="Eiglmeier K."/>
            <person name="Gas S."/>
            <person name="Barry C.E. III"/>
            <person name="Tekaia F."/>
            <person name="Badcock K."/>
            <person name="Basham D."/>
            <person name="Brown D."/>
            <person name="Chillingworth T."/>
            <person name="Connor R."/>
            <person name="Davies R.M."/>
            <person name="Devlin K."/>
            <person name="Feltwell T."/>
            <person name="Gentles S."/>
            <person name="Hamlin N."/>
            <person name="Holroyd S."/>
            <person name="Hornsby T."/>
            <person name="Jagels K."/>
            <person name="Krogh A."/>
            <person name="McLean J."/>
            <person name="Moule S."/>
            <person name="Murphy L.D."/>
            <person name="Oliver S."/>
            <person name="Osborne J."/>
            <person name="Quail M.A."/>
            <person name="Rajandream M.A."/>
            <person name="Rogers J."/>
            <person name="Rutter S."/>
            <person name="Seeger K."/>
            <person name="Skelton S."/>
            <person name="Squares S."/>
            <person name="Squares R."/>
            <person name="Sulston J.E."/>
            <person name="Taylor K."/>
            <person name="Whitehead S."/>
            <person name="Barrell B.G."/>
        </authorList>
    </citation>
    <scope>NUCLEOTIDE SEQUENCE [LARGE SCALE GENOMIC DNA]</scope>
    <source>
        <strain>ATCC 25618 / H37Rv</strain>
    </source>
</reference>
<reference key="2">
    <citation type="journal article" date="2011" name="Mol. Cell. Proteomics">
        <title>Proteogenomic analysis of Mycobacterium tuberculosis by high resolution mass spectrometry.</title>
        <authorList>
            <person name="Kelkar D.S."/>
            <person name="Kumar D."/>
            <person name="Kumar P."/>
            <person name="Balakrishnan L."/>
            <person name="Muthusamy B."/>
            <person name="Yadav A.K."/>
            <person name="Shrivastava P."/>
            <person name="Marimuthu A."/>
            <person name="Anand S."/>
            <person name="Sundaram H."/>
            <person name="Kingsbury R."/>
            <person name="Harsha H.C."/>
            <person name="Nair B."/>
            <person name="Prasad T.S."/>
            <person name="Chauhan D.S."/>
            <person name="Katoch K."/>
            <person name="Katoch V.M."/>
            <person name="Kumar P."/>
            <person name="Chaerkady R."/>
            <person name="Ramachandran S."/>
            <person name="Dash D."/>
            <person name="Pandey A."/>
        </authorList>
    </citation>
    <scope>IDENTIFICATION BY MASS SPECTROMETRY [LARGE SCALE ANALYSIS]</scope>
    <source>
        <strain>ATCC 25618 / H37Rv</strain>
    </source>
</reference>
<organism>
    <name type="scientific">Mycobacterium tuberculosis (strain ATCC 25618 / H37Rv)</name>
    <dbReference type="NCBI Taxonomy" id="83332"/>
    <lineage>
        <taxon>Bacteria</taxon>
        <taxon>Bacillati</taxon>
        <taxon>Actinomycetota</taxon>
        <taxon>Actinomycetes</taxon>
        <taxon>Mycobacteriales</taxon>
        <taxon>Mycobacteriaceae</taxon>
        <taxon>Mycobacterium</taxon>
        <taxon>Mycobacterium tuberculosis complex</taxon>
    </lineage>
</organism>
<keyword id="KW-0002">3D-structure</keyword>
<keyword id="KW-0414">Isoprene biosynthesis</keyword>
<keyword id="KW-0460">Magnesium</keyword>
<keyword id="KW-0479">Metal-binding</keyword>
<keyword id="KW-1185">Reference proteome</keyword>
<keyword id="KW-0784">Thiamine biosynthesis</keyword>
<keyword id="KW-0786">Thiamine pyrophosphate</keyword>
<keyword id="KW-0808">Transferase</keyword>
<accession>P9WNS3</accession>
<accession>L0TAC0</accession>
<accession>O07184</accession>
<accession>P0A554</accession>
<gene>
    <name evidence="1" type="primary">dxs</name>
    <name type="ordered locus">Rv2682c</name>
    <name type="ORF">MTCY05A6.03c</name>
</gene>
<dbReference type="EC" id="2.2.1.7" evidence="1"/>
<dbReference type="EMBL" id="AL123456">
    <property type="protein sequence ID" value="CCP45480.1"/>
    <property type="molecule type" value="Genomic_DNA"/>
</dbReference>
<dbReference type="PIR" id="E70528">
    <property type="entry name" value="E70528"/>
</dbReference>
<dbReference type="RefSeq" id="WP_003413891.1">
    <property type="nucleotide sequence ID" value="NZ_NVQJ01000017.1"/>
</dbReference>
<dbReference type="RefSeq" id="YP_177898.1">
    <property type="nucleotide sequence ID" value="NC_000962.3"/>
</dbReference>
<dbReference type="PDB" id="7A9H">
    <property type="method" value="X-ray"/>
    <property type="resolution" value="1.85 A"/>
    <property type="chains" value="AAA/BBB=1-189, AAA/BBB=235-638"/>
</dbReference>
<dbReference type="PDB" id="8OGH">
    <property type="method" value="X-ray"/>
    <property type="resolution" value="1.60 A"/>
    <property type="chains" value="A/B=1-189, A/B=235-638"/>
</dbReference>
<dbReference type="PDB" id="9HN8">
    <property type="method" value="X-ray"/>
    <property type="resolution" value="2.65 A"/>
    <property type="chains" value="A/B=1-189, A/B=235-638"/>
</dbReference>
<dbReference type="PDBsum" id="7A9H"/>
<dbReference type="PDBsum" id="8OGH"/>
<dbReference type="PDBsum" id="9HN8"/>
<dbReference type="SMR" id="P9WNS3"/>
<dbReference type="FunCoup" id="P9WNS3">
    <property type="interactions" value="240"/>
</dbReference>
<dbReference type="STRING" id="83332.Rv2682c"/>
<dbReference type="BindingDB" id="P9WNS3"/>
<dbReference type="ChEMBL" id="CHEMBL5091"/>
<dbReference type="SwissLipids" id="SLP:000001173"/>
<dbReference type="PaxDb" id="83332-Rv2682c"/>
<dbReference type="DNASU" id="887461"/>
<dbReference type="GeneID" id="887461"/>
<dbReference type="KEGG" id="mtu:Rv2682c"/>
<dbReference type="KEGG" id="mtv:RVBD_2682c"/>
<dbReference type="TubercuList" id="Rv2682c"/>
<dbReference type="eggNOG" id="COG1154">
    <property type="taxonomic scope" value="Bacteria"/>
</dbReference>
<dbReference type="InParanoid" id="P9WNS3"/>
<dbReference type="OrthoDB" id="9803371at2"/>
<dbReference type="PhylomeDB" id="P9WNS3"/>
<dbReference type="UniPathway" id="UPA00064">
    <property type="reaction ID" value="UER00091"/>
</dbReference>
<dbReference type="Proteomes" id="UP000001584">
    <property type="component" value="Chromosome"/>
</dbReference>
<dbReference type="GO" id="GO:0005829">
    <property type="term" value="C:cytosol"/>
    <property type="evidence" value="ECO:0000318"/>
    <property type="project" value="GO_Central"/>
</dbReference>
<dbReference type="GO" id="GO:0008661">
    <property type="term" value="F:1-deoxy-D-xylulose-5-phosphate synthase activity"/>
    <property type="evidence" value="ECO:0000314"/>
    <property type="project" value="MTBBASE"/>
</dbReference>
<dbReference type="GO" id="GO:0000287">
    <property type="term" value="F:magnesium ion binding"/>
    <property type="evidence" value="ECO:0000314"/>
    <property type="project" value="MTBBASE"/>
</dbReference>
<dbReference type="GO" id="GO:0030145">
    <property type="term" value="F:manganese ion binding"/>
    <property type="evidence" value="ECO:0000314"/>
    <property type="project" value="MTBBASE"/>
</dbReference>
<dbReference type="GO" id="GO:0030975">
    <property type="term" value="F:thiamine binding"/>
    <property type="evidence" value="ECO:0000314"/>
    <property type="project" value="MTBBASE"/>
</dbReference>
<dbReference type="GO" id="GO:0030976">
    <property type="term" value="F:thiamine pyrophosphate binding"/>
    <property type="evidence" value="ECO:0007669"/>
    <property type="project" value="UniProtKB-UniRule"/>
</dbReference>
<dbReference type="GO" id="GO:0052865">
    <property type="term" value="P:1-deoxy-D-xylulose 5-phosphate biosynthetic process"/>
    <property type="evidence" value="ECO:0007669"/>
    <property type="project" value="UniProtKB-UniPathway"/>
</dbReference>
<dbReference type="GO" id="GO:0019288">
    <property type="term" value="P:isopentenyl diphosphate biosynthetic process, methylerythritol 4-phosphate pathway"/>
    <property type="evidence" value="ECO:0000314"/>
    <property type="project" value="MTBBASE"/>
</dbReference>
<dbReference type="GO" id="GO:0010628">
    <property type="term" value="P:positive regulation of gene expression"/>
    <property type="evidence" value="ECO:0000315"/>
    <property type="project" value="UniProtKB"/>
</dbReference>
<dbReference type="GO" id="GO:0016114">
    <property type="term" value="P:terpenoid biosynthetic process"/>
    <property type="evidence" value="ECO:0007669"/>
    <property type="project" value="UniProtKB-UniRule"/>
</dbReference>
<dbReference type="GO" id="GO:0009228">
    <property type="term" value="P:thiamine biosynthetic process"/>
    <property type="evidence" value="ECO:0007669"/>
    <property type="project" value="UniProtKB-UniRule"/>
</dbReference>
<dbReference type="CDD" id="cd02007">
    <property type="entry name" value="TPP_DXS"/>
    <property type="match status" value="1"/>
</dbReference>
<dbReference type="CDD" id="cd07033">
    <property type="entry name" value="TPP_PYR_DXS_TK_like"/>
    <property type="match status" value="1"/>
</dbReference>
<dbReference type="FunFam" id="3.40.50.920:FF:000002">
    <property type="entry name" value="1-deoxy-D-xylulose-5-phosphate synthase"/>
    <property type="match status" value="1"/>
</dbReference>
<dbReference type="FunFam" id="3.40.50.970:FF:000005">
    <property type="entry name" value="1-deoxy-D-xylulose-5-phosphate synthase"/>
    <property type="match status" value="1"/>
</dbReference>
<dbReference type="Gene3D" id="3.40.50.920">
    <property type="match status" value="1"/>
</dbReference>
<dbReference type="Gene3D" id="3.40.50.970">
    <property type="match status" value="2"/>
</dbReference>
<dbReference type="HAMAP" id="MF_00315">
    <property type="entry name" value="DXP_synth"/>
    <property type="match status" value="1"/>
</dbReference>
<dbReference type="InterPro" id="IPR005477">
    <property type="entry name" value="Dxylulose-5-P_synthase"/>
</dbReference>
<dbReference type="InterPro" id="IPR029061">
    <property type="entry name" value="THDP-binding"/>
</dbReference>
<dbReference type="InterPro" id="IPR009014">
    <property type="entry name" value="Transketo_C/PFOR_II"/>
</dbReference>
<dbReference type="InterPro" id="IPR005475">
    <property type="entry name" value="Transketolase-like_Pyr-bd"/>
</dbReference>
<dbReference type="InterPro" id="IPR020826">
    <property type="entry name" value="Transketolase_BS"/>
</dbReference>
<dbReference type="InterPro" id="IPR033248">
    <property type="entry name" value="Transketolase_C"/>
</dbReference>
<dbReference type="InterPro" id="IPR049557">
    <property type="entry name" value="Transketolase_CS"/>
</dbReference>
<dbReference type="NCBIfam" id="TIGR00204">
    <property type="entry name" value="dxs"/>
    <property type="match status" value="1"/>
</dbReference>
<dbReference type="NCBIfam" id="NF003933">
    <property type="entry name" value="PRK05444.2-2"/>
    <property type="match status" value="1"/>
</dbReference>
<dbReference type="PANTHER" id="PTHR43322">
    <property type="entry name" value="1-D-DEOXYXYLULOSE 5-PHOSPHATE SYNTHASE-RELATED"/>
    <property type="match status" value="1"/>
</dbReference>
<dbReference type="PANTHER" id="PTHR43322:SF5">
    <property type="entry name" value="1-DEOXY-D-XYLULOSE-5-PHOSPHATE SYNTHASE, CHLOROPLASTIC"/>
    <property type="match status" value="1"/>
</dbReference>
<dbReference type="Pfam" id="PF13292">
    <property type="entry name" value="DXP_synthase_N"/>
    <property type="match status" value="1"/>
</dbReference>
<dbReference type="Pfam" id="PF02779">
    <property type="entry name" value="Transket_pyr"/>
    <property type="match status" value="1"/>
</dbReference>
<dbReference type="Pfam" id="PF02780">
    <property type="entry name" value="Transketolase_C"/>
    <property type="match status" value="1"/>
</dbReference>
<dbReference type="SMART" id="SM00861">
    <property type="entry name" value="Transket_pyr"/>
    <property type="match status" value="1"/>
</dbReference>
<dbReference type="SUPFAM" id="SSF52518">
    <property type="entry name" value="Thiamin diphosphate-binding fold (THDP-binding)"/>
    <property type="match status" value="2"/>
</dbReference>
<dbReference type="SUPFAM" id="SSF52922">
    <property type="entry name" value="TK C-terminal domain-like"/>
    <property type="match status" value="1"/>
</dbReference>
<dbReference type="PROSITE" id="PS00801">
    <property type="entry name" value="TRANSKETOLASE_1"/>
    <property type="match status" value="1"/>
</dbReference>
<dbReference type="PROSITE" id="PS00802">
    <property type="entry name" value="TRANSKETOLASE_2"/>
    <property type="match status" value="1"/>
</dbReference>
<proteinExistence type="evidence at protein level"/>
<comment type="function">
    <text evidence="1">Catalyzes the acyloin condensation reaction between C atoms 2 and 3 of pyruvate and glyceraldehyde 3-phosphate to yield 1-deoxy-D-xylulose-5-phosphate (DXP).</text>
</comment>
<comment type="catalytic activity">
    <reaction evidence="1">
        <text>D-glyceraldehyde 3-phosphate + pyruvate + H(+) = 1-deoxy-D-xylulose 5-phosphate + CO2</text>
        <dbReference type="Rhea" id="RHEA:12605"/>
        <dbReference type="ChEBI" id="CHEBI:15361"/>
        <dbReference type="ChEBI" id="CHEBI:15378"/>
        <dbReference type="ChEBI" id="CHEBI:16526"/>
        <dbReference type="ChEBI" id="CHEBI:57792"/>
        <dbReference type="ChEBI" id="CHEBI:59776"/>
        <dbReference type="EC" id="2.2.1.7"/>
    </reaction>
</comment>
<comment type="cofactor">
    <cofactor evidence="1">
        <name>Mg(2+)</name>
        <dbReference type="ChEBI" id="CHEBI:18420"/>
    </cofactor>
    <text evidence="1">Binds 1 Mg(2+) ion per subunit.</text>
</comment>
<comment type="cofactor">
    <cofactor evidence="1">
        <name>thiamine diphosphate</name>
        <dbReference type="ChEBI" id="CHEBI:58937"/>
    </cofactor>
    <text evidence="1">Binds 1 thiamine pyrophosphate per subunit.</text>
</comment>
<comment type="pathway">
    <text evidence="1">Metabolic intermediate biosynthesis; 1-deoxy-D-xylulose 5-phosphate biosynthesis; 1-deoxy-D-xylulose 5-phosphate from D-glyceraldehyde 3-phosphate and pyruvate: step 1/1.</text>
</comment>
<comment type="subunit">
    <text evidence="1">Homodimer.</text>
</comment>
<comment type="similarity">
    <text evidence="1">Belongs to the transketolase family. DXPS subfamily.</text>
</comment>
<sequence>MLQQIRGPADLQHLSQAQLRELAAEIREFLIHKVAATGGHLGPNLGVVELTLALHRVFDSPHDPIIFDTGHQAYVHKMLTGRSQDFATLRKKGGLSGYPSRAESEHDWVESSHASAALSYADGLAKAFELTGHRNRHVVAVVGDGALTGGMCWEALNNIAASRRPVIIVVNDNGRSYAPTIGGVADHLATLRLQPAYEQALETGRDLVRAVPLVGGLWFRFLHSVKAGIKDSLSPQLLFTDLGLKYVGPVDGHDERAVEVALRSARRFGAPVIVHVVTRKGMGYPPAEADQAEQMHSTVPIDPATGQATKVAGPGWTATFSDALIGYAQKRRDIVAITAAMPGPTGLTAFGQRFPDRLFDVGIAEQHAMTSAAGLAMGGLHPVVAIYSTFLNRAFDQIMMDVALHKLPVTMVLDRAGITGSDGASHNGMWDLSMLGIVPGIRVAAPRDATRLREELGEALDVDDGPTALRFPKGDVGEDISALERRGGVDVLAAPADGLNHDVLLVAIGAFAPMALAVAKRLHNQGIGVTVIDPRWVLPVSDGVRELAVQHKLLVTLEDNGVNGGAGSAVSAALRRAEIDVPCRDVGLPQEFYEHASRSEVLADLGLTDQDVARRITGWVAALGTGVCASDAIPEHLD</sequence>
<name>DXS_MYCTU</name>
<protein>
    <recommendedName>
        <fullName evidence="1">1-deoxy-D-xylulose-5-phosphate synthase</fullName>
        <ecNumber evidence="1">2.2.1.7</ecNumber>
    </recommendedName>
    <alternativeName>
        <fullName evidence="1">1-deoxyxylulose-5-phosphate synthase</fullName>
        <shortName evidence="1">DXP synthase</shortName>
        <shortName evidence="1">DXPS</shortName>
    </alternativeName>
</protein>
<feature type="chain" id="PRO_0000189130" description="1-deoxy-D-xylulose-5-phosphate synthase">
    <location>
        <begin position="1"/>
        <end position="638"/>
    </location>
</feature>
<feature type="binding site" evidence="1">
    <location>
        <position position="71"/>
    </location>
    <ligand>
        <name>thiamine diphosphate</name>
        <dbReference type="ChEBI" id="CHEBI:58937"/>
    </ligand>
</feature>
<feature type="binding site" evidence="1">
    <location>
        <begin position="112"/>
        <end position="114"/>
    </location>
    <ligand>
        <name>thiamine diphosphate</name>
        <dbReference type="ChEBI" id="CHEBI:58937"/>
    </ligand>
</feature>
<feature type="binding site" evidence="1">
    <location>
        <position position="144"/>
    </location>
    <ligand>
        <name>Mg(2+)</name>
        <dbReference type="ChEBI" id="CHEBI:18420"/>
    </ligand>
</feature>
<feature type="binding site" evidence="1">
    <location>
        <begin position="145"/>
        <end position="146"/>
    </location>
    <ligand>
        <name>thiamine diphosphate</name>
        <dbReference type="ChEBI" id="CHEBI:58937"/>
    </ligand>
</feature>
<feature type="binding site" evidence="1">
    <location>
        <position position="173"/>
    </location>
    <ligand>
        <name>Mg(2+)</name>
        <dbReference type="ChEBI" id="CHEBI:18420"/>
    </ligand>
</feature>
<feature type="binding site" evidence="1">
    <location>
        <position position="173"/>
    </location>
    <ligand>
        <name>thiamine diphosphate</name>
        <dbReference type="ChEBI" id="CHEBI:58937"/>
    </ligand>
</feature>
<feature type="binding site" evidence="1">
    <location>
        <position position="284"/>
    </location>
    <ligand>
        <name>thiamine diphosphate</name>
        <dbReference type="ChEBI" id="CHEBI:58937"/>
    </ligand>
</feature>
<feature type="binding site" evidence="1">
    <location>
        <position position="365"/>
    </location>
    <ligand>
        <name>thiamine diphosphate</name>
        <dbReference type="ChEBI" id="CHEBI:58937"/>
    </ligand>
</feature>
<feature type="helix" evidence="2">
    <location>
        <begin position="2"/>
        <end position="4"/>
    </location>
</feature>
<feature type="helix" evidence="2">
    <location>
        <begin position="8"/>
        <end position="11"/>
    </location>
</feature>
<feature type="helix" evidence="2">
    <location>
        <begin position="16"/>
        <end position="37"/>
    </location>
</feature>
<feature type="helix" evidence="2">
    <location>
        <begin position="41"/>
        <end position="45"/>
    </location>
</feature>
<feature type="helix" evidence="2">
    <location>
        <begin position="48"/>
        <end position="57"/>
    </location>
</feature>
<feature type="turn" evidence="2">
    <location>
        <begin position="60"/>
        <end position="62"/>
    </location>
</feature>
<feature type="strand" evidence="2">
    <location>
        <begin position="65"/>
        <end position="70"/>
    </location>
</feature>
<feature type="helix" evidence="2">
    <location>
        <begin position="74"/>
        <end position="78"/>
    </location>
</feature>
<feature type="turn" evidence="2">
    <location>
        <begin position="79"/>
        <end position="82"/>
    </location>
</feature>
<feature type="helix" evidence="2">
    <location>
        <begin position="83"/>
        <end position="88"/>
    </location>
</feature>
<feature type="turn" evidence="2">
    <location>
        <begin position="101"/>
        <end position="103"/>
    </location>
</feature>
<feature type="helix" evidence="2">
    <location>
        <begin position="117"/>
        <end position="130"/>
    </location>
</feature>
<feature type="strand" evidence="2">
    <location>
        <begin position="138"/>
        <end position="143"/>
    </location>
</feature>
<feature type="helix" evidence="2">
    <location>
        <begin position="146"/>
        <end position="148"/>
    </location>
</feature>
<feature type="helix" evidence="2">
    <location>
        <begin position="150"/>
        <end position="160"/>
    </location>
</feature>
<feature type="strand" evidence="2">
    <location>
        <begin position="166"/>
        <end position="172"/>
    </location>
</feature>
<feature type="strand" evidence="2">
    <location>
        <begin position="240"/>
        <end position="251"/>
    </location>
</feature>
<feature type="helix" evidence="2">
    <location>
        <begin position="255"/>
        <end position="268"/>
    </location>
</feature>
<feature type="strand" evidence="2">
    <location>
        <begin position="272"/>
        <end position="277"/>
    </location>
</feature>
<feature type="turn" evidence="2">
    <location>
        <begin position="280"/>
        <end position="283"/>
    </location>
</feature>
<feature type="turn" evidence="2">
    <location>
        <begin position="285"/>
        <end position="287"/>
    </location>
</feature>
<feature type="helix" evidence="2">
    <location>
        <begin position="316"/>
        <end position="330"/>
    </location>
</feature>
<feature type="strand" evidence="2">
    <location>
        <begin position="334"/>
        <end position="340"/>
    </location>
</feature>
<feature type="turn" evidence="2">
    <location>
        <begin position="342"/>
        <end position="346"/>
    </location>
</feature>
<feature type="helix" evidence="2">
    <location>
        <begin position="348"/>
        <end position="353"/>
    </location>
</feature>
<feature type="helix" evidence="2">
    <location>
        <begin position="355"/>
        <end position="357"/>
    </location>
</feature>
<feature type="strand" evidence="2">
    <location>
        <begin position="358"/>
        <end position="360"/>
    </location>
</feature>
<feature type="helix" evidence="2">
    <location>
        <begin position="365"/>
        <end position="377"/>
    </location>
</feature>
<feature type="strand" evidence="2">
    <location>
        <begin position="381"/>
        <end position="385"/>
    </location>
</feature>
<feature type="helix" evidence="2">
    <location>
        <begin position="388"/>
        <end position="394"/>
    </location>
</feature>
<feature type="helix" evidence="2">
    <location>
        <begin position="395"/>
        <end position="400"/>
    </location>
</feature>
<feature type="turn" evidence="2">
    <location>
        <begin position="401"/>
        <end position="406"/>
    </location>
</feature>
<feature type="strand" evidence="2">
    <location>
        <begin position="410"/>
        <end position="413"/>
    </location>
</feature>
<feature type="turn" evidence="2">
    <location>
        <begin position="424"/>
        <end position="426"/>
    </location>
</feature>
<feature type="helix" evidence="2">
    <location>
        <begin position="431"/>
        <end position="435"/>
    </location>
</feature>
<feature type="strand" evidence="2">
    <location>
        <begin position="442"/>
        <end position="444"/>
    </location>
</feature>
<feature type="helix" evidence="2">
    <location>
        <begin position="449"/>
        <end position="460"/>
    </location>
</feature>
<feature type="strand" evidence="2">
    <location>
        <begin position="467"/>
        <end position="470"/>
    </location>
</feature>
<feature type="strand" evidence="2">
    <location>
        <begin position="473"/>
        <end position="475"/>
    </location>
</feature>
<feature type="strand" evidence="2">
    <location>
        <begin position="483"/>
        <end position="486"/>
    </location>
</feature>
<feature type="strand" evidence="2">
    <location>
        <begin position="489"/>
        <end position="493"/>
    </location>
</feature>
<feature type="strand" evidence="2">
    <location>
        <begin position="503"/>
        <end position="507"/>
    </location>
</feature>
<feature type="helix" evidence="2">
    <location>
        <begin position="509"/>
        <end position="511"/>
    </location>
</feature>
<feature type="helix" evidence="2">
    <location>
        <begin position="512"/>
        <end position="524"/>
    </location>
</feature>
<feature type="strand" evidence="2">
    <location>
        <begin position="529"/>
        <end position="533"/>
    </location>
</feature>
<feature type="strand" evidence="2">
    <location>
        <begin position="535"/>
        <end position="539"/>
    </location>
</feature>
<feature type="helix" evidence="2">
    <location>
        <begin position="542"/>
        <end position="548"/>
    </location>
</feature>
<feature type="strand" evidence="2">
    <location>
        <begin position="551"/>
        <end position="562"/>
    </location>
</feature>
<feature type="helix" evidence="2">
    <location>
        <begin position="566"/>
        <end position="576"/>
    </location>
</feature>
<feature type="strand" evidence="2">
    <location>
        <begin position="583"/>
        <end position="588"/>
    </location>
</feature>
<feature type="helix" evidence="2">
    <location>
        <begin position="598"/>
        <end position="604"/>
    </location>
</feature>
<feature type="helix" evidence="2">
    <location>
        <begin position="609"/>
        <end position="621"/>
    </location>
</feature>
<feature type="turn" evidence="2">
    <location>
        <begin position="622"/>
        <end position="624"/>
    </location>
</feature>